<name>AROC_HALWD</name>
<gene>
    <name evidence="1" type="primary">aroC</name>
    <name type="ordered locus">HQ_3357A</name>
</gene>
<proteinExistence type="inferred from homology"/>
<accession>Q18F10</accession>
<evidence type="ECO:0000255" key="1">
    <source>
        <dbReference type="HAMAP-Rule" id="MF_00300"/>
    </source>
</evidence>
<evidence type="ECO:0000256" key="2">
    <source>
        <dbReference type="SAM" id="MobiDB-lite"/>
    </source>
</evidence>
<protein>
    <recommendedName>
        <fullName evidence="1">Chorismate synthase</fullName>
        <shortName evidence="1">CS</shortName>
        <ecNumber evidence="1">4.2.3.5</ecNumber>
    </recommendedName>
    <alternativeName>
        <fullName evidence="1">5-enolpyruvylshikimate-3-phosphate phospholyase</fullName>
    </alternativeName>
</protein>
<organism>
    <name type="scientific">Haloquadratum walsbyi (strain DSM 16790 / HBSQ001)</name>
    <dbReference type="NCBI Taxonomy" id="362976"/>
    <lineage>
        <taxon>Archaea</taxon>
        <taxon>Methanobacteriati</taxon>
        <taxon>Methanobacteriota</taxon>
        <taxon>Stenosarchaea group</taxon>
        <taxon>Halobacteria</taxon>
        <taxon>Halobacteriales</taxon>
        <taxon>Haloferacaceae</taxon>
        <taxon>Haloquadratum</taxon>
    </lineage>
</organism>
<sequence>MNGNRFGRMFQVTTYGESHGDAMGVTVSGCPAGLELEEADIQAELDRRKPGQSMITTSRGEPDAVEINSGVQDGYTTGTPIGMVIENKDARSGKYEPYVTAPRPSHGDFTYSAKFGTRNWGGGGRSSARETVNWVAAGAIAQKILTEYGIKAKAHVNQIGDIKAPPVTFEEMLEHTEENEVRCAHPETAERMRERIDEYQTEGDSIGGSIYFEARGVPAGLGAPRFDSLPARLGKAMFSVPATTSVEYGLGHEAREWRGSNRNEDWEFDEDGNPIPEGNTHGGLQGGITTGQPIYGEATWHAPTSIPKEQQTVDWETGEQKDIQVVGRHDPVLPPRAVPVVEAMLNITILDFMLLDGQINPDRLDDNPGQYETEYHPSSPQTN</sequence>
<keyword id="KW-0028">Amino-acid biosynthesis</keyword>
<keyword id="KW-0057">Aromatic amino acid biosynthesis</keyword>
<keyword id="KW-0274">FAD</keyword>
<keyword id="KW-0285">Flavoprotein</keyword>
<keyword id="KW-0288">FMN</keyword>
<keyword id="KW-0456">Lyase</keyword>
<keyword id="KW-0521">NADP</keyword>
<keyword id="KW-1185">Reference proteome</keyword>
<comment type="function">
    <text evidence="1">Catalyzes the anti-1,4-elimination of the C-3 phosphate and the C-6 proR hydrogen from 5-enolpyruvylshikimate-3-phosphate (EPSP) to yield chorismate, which is the branch point compound that serves as the starting substrate for the three terminal pathways of aromatic amino acid biosynthesis. This reaction introduces a second double bond into the aromatic ring system.</text>
</comment>
<comment type="catalytic activity">
    <reaction evidence="1">
        <text>5-O-(1-carboxyvinyl)-3-phosphoshikimate = chorismate + phosphate</text>
        <dbReference type="Rhea" id="RHEA:21020"/>
        <dbReference type="ChEBI" id="CHEBI:29748"/>
        <dbReference type="ChEBI" id="CHEBI:43474"/>
        <dbReference type="ChEBI" id="CHEBI:57701"/>
        <dbReference type="EC" id="4.2.3.5"/>
    </reaction>
</comment>
<comment type="cofactor">
    <cofactor evidence="1">
        <name>FMNH2</name>
        <dbReference type="ChEBI" id="CHEBI:57618"/>
    </cofactor>
    <text evidence="1">Reduced FMN (FMNH(2)).</text>
</comment>
<comment type="pathway">
    <text evidence="1">Metabolic intermediate biosynthesis; chorismate biosynthesis; chorismate from D-erythrose 4-phosphate and phosphoenolpyruvate: step 7/7.</text>
</comment>
<comment type="similarity">
    <text evidence="1">Belongs to the chorismate synthase family.</text>
</comment>
<reference key="1">
    <citation type="journal article" date="2006" name="BMC Genomics">
        <title>The genome of the square archaeon Haloquadratum walsbyi: life at the limits of water activity.</title>
        <authorList>
            <person name="Bolhuis H."/>
            <person name="Palm P."/>
            <person name="Wende A."/>
            <person name="Falb M."/>
            <person name="Rampp M."/>
            <person name="Rodriguez-Valera F."/>
            <person name="Pfeiffer F."/>
            <person name="Oesterhelt D."/>
        </authorList>
    </citation>
    <scope>NUCLEOTIDE SEQUENCE [LARGE SCALE GENOMIC DNA]</scope>
    <source>
        <strain>DSM 16790 / HBSQ001</strain>
    </source>
</reference>
<dbReference type="EC" id="4.2.3.5" evidence="1"/>
<dbReference type="EMBL" id="AM180088">
    <property type="protein sequence ID" value="CAJ53454.1"/>
    <property type="molecule type" value="Genomic_DNA"/>
</dbReference>
<dbReference type="RefSeq" id="WP_011572552.1">
    <property type="nucleotide sequence ID" value="NC_008212.1"/>
</dbReference>
<dbReference type="SMR" id="Q18F10"/>
<dbReference type="STRING" id="362976.HQ_3357A"/>
<dbReference type="GeneID" id="4193720"/>
<dbReference type="KEGG" id="hwa:HQ_3357A"/>
<dbReference type="eggNOG" id="arCOG04133">
    <property type="taxonomic scope" value="Archaea"/>
</dbReference>
<dbReference type="HOGENOM" id="CLU_034547_0_0_2"/>
<dbReference type="UniPathway" id="UPA00053">
    <property type="reaction ID" value="UER00090"/>
</dbReference>
<dbReference type="Proteomes" id="UP000001975">
    <property type="component" value="Chromosome"/>
</dbReference>
<dbReference type="GO" id="GO:0005829">
    <property type="term" value="C:cytosol"/>
    <property type="evidence" value="ECO:0007669"/>
    <property type="project" value="TreeGrafter"/>
</dbReference>
<dbReference type="GO" id="GO:0004107">
    <property type="term" value="F:chorismate synthase activity"/>
    <property type="evidence" value="ECO:0007669"/>
    <property type="project" value="UniProtKB-UniRule"/>
</dbReference>
<dbReference type="GO" id="GO:0010181">
    <property type="term" value="F:FMN binding"/>
    <property type="evidence" value="ECO:0007669"/>
    <property type="project" value="TreeGrafter"/>
</dbReference>
<dbReference type="GO" id="GO:0008652">
    <property type="term" value="P:amino acid biosynthetic process"/>
    <property type="evidence" value="ECO:0007669"/>
    <property type="project" value="UniProtKB-KW"/>
</dbReference>
<dbReference type="GO" id="GO:0009073">
    <property type="term" value="P:aromatic amino acid family biosynthetic process"/>
    <property type="evidence" value="ECO:0007669"/>
    <property type="project" value="UniProtKB-KW"/>
</dbReference>
<dbReference type="GO" id="GO:0009423">
    <property type="term" value="P:chorismate biosynthetic process"/>
    <property type="evidence" value="ECO:0007669"/>
    <property type="project" value="UniProtKB-UniRule"/>
</dbReference>
<dbReference type="CDD" id="cd07304">
    <property type="entry name" value="Chorismate_synthase"/>
    <property type="match status" value="1"/>
</dbReference>
<dbReference type="Gene3D" id="3.60.150.10">
    <property type="entry name" value="Chorismate synthase AroC"/>
    <property type="match status" value="1"/>
</dbReference>
<dbReference type="HAMAP" id="MF_00300">
    <property type="entry name" value="Chorismate_synth"/>
    <property type="match status" value="1"/>
</dbReference>
<dbReference type="InterPro" id="IPR000453">
    <property type="entry name" value="Chorismate_synth"/>
</dbReference>
<dbReference type="InterPro" id="IPR035904">
    <property type="entry name" value="Chorismate_synth_AroC_sf"/>
</dbReference>
<dbReference type="InterPro" id="IPR020541">
    <property type="entry name" value="Chorismate_synthase_CS"/>
</dbReference>
<dbReference type="NCBIfam" id="TIGR00033">
    <property type="entry name" value="aroC"/>
    <property type="match status" value="1"/>
</dbReference>
<dbReference type="NCBIfam" id="NF003793">
    <property type="entry name" value="PRK05382.1"/>
    <property type="match status" value="1"/>
</dbReference>
<dbReference type="PANTHER" id="PTHR21085">
    <property type="entry name" value="CHORISMATE SYNTHASE"/>
    <property type="match status" value="1"/>
</dbReference>
<dbReference type="PANTHER" id="PTHR21085:SF0">
    <property type="entry name" value="CHORISMATE SYNTHASE"/>
    <property type="match status" value="1"/>
</dbReference>
<dbReference type="Pfam" id="PF01264">
    <property type="entry name" value="Chorismate_synt"/>
    <property type="match status" value="1"/>
</dbReference>
<dbReference type="PIRSF" id="PIRSF001456">
    <property type="entry name" value="Chorismate_synth"/>
    <property type="match status" value="1"/>
</dbReference>
<dbReference type="SUPFAM" id="SSF103263">
    <property type="entry name" value="Chorismate synthase, AroC"/>
    <property type="match status" value="1"/>
</dbReference>
<dbReference type="PROSITE" id="PS00787">
    <property type="entry name" value="CHORISMATE_SYNTHASE_1"/>
    <property type="match status" value="1"/>
</dbReference>
<dbReference type="PROSITE" id="PS00788">
    <property type="entry name" value="CHORISMATE_SYNTHASE_2"/>
    <property type="match status" value="1"/>
</dbReference>
<dbReference type="PROSITE" id="PS00789">
    <property type="entry name" value="CHORISMATE_SYNTHASE_3"/>
    <property type="match status" value="1"/>
</dbReference>
<feature type="chain" id="PRO_0000256365" description="Chorismate synthase">
    <location>
        <begin position="1"/>
        <end position="383"/>
    </location>
</feature>
<feature type="region of interest" description="Disordered" evidence="2">
    <location>
        <begin position="361"/>
        <end position="383"/>
    </location>
</feature>
<feature type="binding site" evidence="1">
    <location>
        <position position="48"/>
    </location>
    <ligand>
        <name>NADP(+)</name>
        <dbReference type="ChEBI" id="CHEBI:58349"/>
    </ligand>
</feature>
<feature type="binding site" evidence="1">
    <location>
        <begin position="125"/>
        <end position="127"/>
    </location>
    <ligand>
        <name>FMN</name>
        <dbReference type="ChEBI" id="CHEBI:58210"/>
    </ligand>
</feature>
<feature type="binding site" evidence="1">
    <location>
        <position position="286"/>
    </location>
    <ligand>
        <name>FMN</name>
        <dbReference type="ChEBI" id="CHEBI:58210"/>
    </ligand>
</feature>
<feature type="binding site" evidence="1">
    <location>
        <begin position="301"/>
        <end position="305"/>
    </location>
    <ligand>
        <name>FMN</name>
        <dbReference type="ChEBI" id="CHEBI:58210"/>
    </ligand>
</feature>
<feature type="binding site" evidence="1">
    <location>
        <position position="328"/>
    </location>
    <ligand>
        <name>FMN</name>
        <dbReference type="ChEBI" id="CHEBI:58210"/>
    </ligand>
</feature>